<gene>
    <name type="primary">MT-CO2</name>
    <name type="synonym">COII</name>
    <name type="synonym">COX2</name>
    <name type="synonym">COXII</name>
    <name type="synonym">MTCO2</name>
</gene>
<comment type="function">
    <text evidence="2">Component of the cytochrome c oxidase, the last enzyme in the mitochondrial electron transport chain which drives oxidative phosphorylation. The respiratory chain contains 3 multisubunit complexes succinate dehydrogenase (complex II, CII), ubiquinol-cytochrome c oxidoreductase (cytochrome b-c1 complex, complex III, CIII) and cytochrome c oxidase (complex IV, CIV), that cooperate to transfer electrons derived from NADH and succinate to molecular oxygen, creating an electrochemical gradient over the inner membrane that drives transmembrane transport and the ATP synthase. Cytochrome c oxidase is the component of the respiratory chain that catalyzes the reduction of oxygen to water. Electrons originating from reduced cytochrome c in the intermembrane space (IMS) are transferred via the dinuclear copper A center (CU(A)) of subunit 2 and heme A of subunit 1 to the active site in subunit 1, a binuclear center (BNC) formed by heme A3 and copper B (CU(B)). The BNC reduces molecular oxygen to 2 water molecules using 4 electrons from cytochrome c in the IMS and 4 protons from the mitochondrial matrix.</text>
</comment>
<comment type="catalytic activity">
    <reaction evidence="2">
        <text>4 Fe(II)-[cytochrome c] + O2 + 8 H(+)(in) = 4 Fe(III)-[cytochrome c] + 2 H2O + 4 H(+)(out)</text>
        <dbReference type="Rhea" id="RHEA:11436"/>
        <dbReference type="Rhea" id="RHEA-COMP:10350"/>
        <dbReference type="Rhea" id="RHEA-COMP:14399"/>
        <dbReference type="ChEBI" id="CHEBI:15377"/>
        <dbReference type="ChEBI" id="CHEBI:15378"/>
        <dbReference type="ChEBI" id="CHEBI:15379"/>
        <dbReference type="ChEBI" id="CHEBI:29033"/>
        <dbReference type="ChEBI" id="CHEBI:29034"/>
        <dbReference type="EC" id="7.1.1.9"/>
    </reaction>
    <physiologicalReaction direction="left-to-right" evidence="2">
        <dbReference type="Rhea" id="RHEA:11437"/>
    </physiologicalReaction>
</comment>
<comment type="cofactor">
    <cofactor evidence="3">
        <name>Cu cation</name>
        <dbReference type="ChEBI" id="CHEBI:23378"/>
    </cofactor>
    <text evidence="3">Binds a dinuclear copper A center per subunit.</text>
</comment>
<comment type="subunit">
    <text evidence="1 3">Component of the cytochrome c oxidase (complex IV, CIV), a multisubunit enzyme composed of 14 subunits. The complex is composed of a catalytic core of 3 subunits MT-CO1, MT-CO2 and MT-CO3, encoded in the mitochondrial DNA, and 11 supernumerary subunits COX4I, COX5A, COX5B, COX6A, COX6B, COX6C, COX7A, COX7B, COX7C, COX8 and NDUFA4, which are encoded in the nuclear genome. The complex exists as a monomer or a dimer and forms supercomplexes (SCs) in the inner mitochondrial membrane with NADH-ubiquinone oxidoreductase (complex I, CI) and ubiquinol-cytochrome c oxidoreductase (cytochrome b-c1 complex, complex III, CIII), resulting in different assemblies (supercomplex SCI(1)III(2)IV(1) and megacomplex MCI(2)III(2)IV(2)) (By similarity). Found in a complex with TMEM177, COA6, COX18, COX20, SCO1 and SCO2. Interacts with TMEM177 in a COX20-dependent manner. Interacts with COX20. Interacts with COX16 (By similarity).</text>
</comment>
<comment type="subcellular location">
    <subcellularLocation>
        <location evidence="3">Mitochondrion inner membrane</location>
        <topology evidence="3">Multi-pass membrane protein</topology>
    </subcellularLocation>
</comment>
<comment type="similarity">
    <text evidence="4">Belongs to the cytochrome c oxidase subunit 2 family.</text>
</comment>
<feature type="chain" id="PRO_0000257857" description="Cytochrome c oxidase subunit 2">
    <location>
        <begin position="1"/>
        <end position="227"/>
    </location>
</feature>
<feature type="topological domain" description="Mitochondrial intermembrane" evidence="3">
    <location>
        <begin position="1"/>
        <end position="14"/>
    </location>
</feature>
<feature type="transmembrane region" description="Helical; Name=I" evidence="3">
    <location>
        <begin position="15"/>
        <end position="45"/>
    </location>
</feature>
<feature type="topological domain" description="Mitochondrial matrix" evidence="3">
    <location>
        <begin position="46"/>
        <end position="59"/>
    </location>
</feature>
<feature type="transmembrane region" description="Helical; Name=II" evidence="3">
    <location>
        <begin position="60"/>
        <end position="87"/>
    </location>
</feature>
<feature type="topological domain" description="Mitochondrial intermembrane" evidence="3">
    <location>
        <begin position="88"/>
        <end position="227"/>
    </location>
</feature>
<feature type="binding site" evidence="3">
    <location>
        <position position="161"/>
    </location>
    <ligand>
        <name>Cu cation</name>
        <dbReference type="ChEBI" id="CHEBI:23378"/>
        <label>A1</label>
    </ligand>
</feature>
<feature type="binding site" evidence="3">
    <location>
        <position position="196"/>
    </location>
    <ligand>
        <name>Cu cation</name>
        <dbReference type="ChEBI" id="CHEBI:23378"/>
        <label>A1</label>
    </ligand>
</feature>
<feature type="binding site" evidence="3">
    <location>
        <position position="196"/>
    </location>
    <ligand>
        <name>Cu cation</name>
        <dbReference type="ChEBI" id="CHEBI:23378"/>
        <label>A2</label>
    </ligand>
</feature>
<feature type="binding site" evidence="3">
    <location>
        <position position="198"/>
    </location>
    <ligand>
        <name>Cu cation</name>
        <dbReference type="ChEBI" id="CHEBI:23378"/>
        <label>A2</label>
    </ligand>
</feature>
<feature type="binding site" evidence="3">
    <location>
        <position position="198"/>
    </location>
    <ligand>
        <name>Mg(2+)</name>
        <dbReference type="ChEBI" id="CHEBI:18420"/>
        <note>ligand shared with MT-CO1</note>
    </ligand>
</feature>
<feature type="binding site" evidence="3">
    <location>
        <position position="200"/>
    </location>
    <ligand>
        <name>Cu cation</name>
        <dbReference type="ChEBI" id="CHEBI:23378"/>
        <label>A1</label>
    </ligand>
</feature>
<feature type="binding site" evidence="3">
    <location>
        <position position="200"/>
    </location>
    <ligand>
        <name>Cu cation</name>
        <dbReference type="ChEBI" id="CHEBI:23378"/>
        <label>A2</label>
    </ligand>
</feature>
<feature type="binding site" evidence="3">
    <location>
        <position position="204"/>
    </location>
    <ligand>
        <name>Cu cation</name>
        <dbReference type="ChEBI" id="CHEBI:23378"/>
        <label>A2</label>
    </ligand>
</feature>
<feature type="binding site" evidence="3">
    <location>
        <position position="207"/>
    </location>
    <ligand>
        <name>Cu cation</name>
        <dbReference type="ChEBI" id="CHEBI:23378"/>
        <label>A1</label>
    </ligand>
</feature>
<reference key="1">
    <citation type="journal article" date="2000" name="J. Mammal. Evol.">
        <title>Molecular phylogeny of the chipmunk genus Tamias based on the mitochondrial cytochrome oxidase subunit II gene.</title>
        <authorList>
            <person name="Piaggio A.J."/>
            <person name="Spicer G.S."/>
        </authorList>
    </citation>
    <scope>NUCLEOTIDE SEQUENCE [GENOMIC DNA]</scope>
</reference>
<accession>Q7IZ01</accession>
<keyword id="KW-0186">Copper</keyword>
<keyword id="KW-0249">Electron transport</keyword>
<keyword id="KW-0460">Magnesium</keyword>
<keyword id="KW-0472">Membrane</keyword>
<keyword id="KW-0479">Metal-binding</keyword>
<keyword id="KW-0496">Mitochondrion</keyword>
<keyword id="KW-0999">Mitochondrion inner membrane</keyword>
<keyword id="KW-0679">Respiratory chain</keyword>
<keyword id="KW-1278">Translocase</keyword>
<keyword id="KW-0812">Transmembrane</keyword>
<keyword id="KW-1133">Transmembrane helix</keyword>
<keyword id="KW-0813">Transport</keyword>
<protein>
    <recommendedName>
        <fullName>Cytochrome c oxidase subunit 2</fullName>
        <ecNumber>7.1.1.9</ecNumber>
    </recommendedName>
    <alternativeName>
        <fullName>Cytochrome c oxidase polypeptide II</fullName>
    </alternativeName>
</protein>
<sequence>MAYPFELGFQDATSPIMEELLHFHDHTLMIVFLISSLVLYIISLMLTTKLTHTSTMDAQEVETIWTILPAIILILIALPSLRILYMMDEINDPSLTVKTMGHQWYWSYEYTDYEDLNFDSYMIPTSDLSPGELRLLEVDNRVVLPMELPIRMLISSEDVLHSWAVPSLGLKTDAIPGRLNQATLTSTRPGLYYGQCSEICGSNHSFMPIVLELVPLKHFENWSSSML</sequence>
<organism>
    <name type="scientific">Tamias palmeri</name>
    <name type="common">Palmer's chipmunk</name>
    <name type="synonym">Neotamias palmeri</name>
    <dbReference type="NCBI Taxonomy" id="123789"/>
    <lineage>
        <taxon>Eukaryota</taxon>
        <taxon>Metazoa</taxon>
        <taxon>Chordata</taxon>
        <taxon>Craniata</taxon>
        <taxon>Vertebrata</taxon>
        <taxon>Euteleostomi</taxon>
        <taxon>Mammalia</taxon>
        <taxon>Eutheria</taxon>
        <taxon>Euarchontoglires</taxon>
        <taxon>Glires</taxon>
        <taxon>Rodentia</taxon>
        <taxon>Sciuromorpha</taxon>
        <taxon>Sciuridae</taxon>
        <taxon>Xerinae</taxon>
        <taxon>Marmotini</taxon>
        <taxon>Tamias</taxon>
    </lineage>
</organism>
<name>COX2_TAMPL</name>
<evidence type="ECO:0000250" key="1">
    <source>
        <dbReference type="UniProtKB" id="P00403"/>
    </source>
</evidence>
<evidence type="ECO:0000250" key="2">
    <source>
        <dbReference type="UniProtKB" id="P00410"/>
    </source>
</evidence>
<evidence type="ECO:0000250" key="3">
    <source>
        <dbReference type="UniProtKB" id="P68530"/>
    </source>
</evidence>
<evidence type="ECO:0000305" key="4"/>
<dbReference type="EC" id="7.1.1.9"/>
<dbReference type="EMBL" id="AF147607">
    <property type="protein sequence ID" value="AAG42600.1"/>
    <property type="molecule type" value="Genomic_DNA"/>
</dbReference>
<dbReference type="SMR" id="Q7IZ01"/>
<dbReference type="GO" id="GO:0005743">
    <property type="term" value="C:mitochondrial inner membrane"/>
    <property type="evidence" value="ECO:0007669"/>
    <property type="project" value="UniProtKB-SubCell"/>
</dbReference>
<dbReference type="GO" id="GO:0045277">
    <property type="term" value="C:respiratory chain complex IV"/>
    <property type="evidence" value="ECO:0000250"/>
    <property type="project" value="UniProtKB"/>
</dbReference>
<dbReference type="GO" id="GO:0005507">
    <property type="term" value="F:copper ion binding"/>
    <property type="evidence" value="ECO:0007669"/>
    <property type="project" value="InterPro"/>
</dbReference>
<dbReference type="GO" id="GO:0004129">
    <property type="term" value="F:cytochrome-c oxidase activity"/>
    <property type="evidence" value="ECO:0007669"/>
    <property type="project" value="UniProtKB-EC"/>
</dbReference>
<dbReference type="GO" id="GO:0042773">
    <property type="term" value="P:ATP synthesis coupled electron transport"/>
    <property type="evidence" value="ECO:0007669"/>
    <property type="project" value="TreeGrafter"/>
</dbReference>
<dbReference type="CDD" id="cd13912">
    <property type="entry name" value="CcO_II_C"/>
    <property type="match status" value="1"/>
</dbReference>
<dbReference type="FunFam" id="1.10.287.90:FF:000001">
    <property type="entry name" value="Cytochrome c oxidase subunit 2"/>
    <property type="match status" value="1"/>
</dbReference>
<dbReference type="FunFam" id="2.60.40.420:FF:000001">
    <property type="entry name" value="Cytochrome c oxidase subunit 2"/>
    <property type="match status" value="1"/>
</dbReference>
<dbReference type="Gene3D" id="1.10.287.90">
    <property type="match status" value="1"/>
</dbReference>
<dbReference type="Gene3D" id="2.60.40.420">
    <property type="entry name" value="Cupredoxins - blue copper proteins"/>
    <property type="match status" value="1"/>
</dbReference>
<dbReference type="InterPro" id="IPR045187">
    <property type="entry name" value="CcO_II"/>
</dbReference>
<dbReference type="InterPro" id="IPR002429">
    <property type="entry name" value="CcO_II-like_C"/>
</dbReference>
<dbReference type="InterPro" id="IPR034210">
    <property type="entry name" value="CcO_II_C"/>
</dbReference>
<dbReference type="InterPro" id="IPR001505">
    <property type="entry name" value="Copper_CuA"/>
</dbReference>
<dbReference type="InterPro" id="IPR008972">
    <property type="entry name" value="Cupredoxin"/>
</dbReference>
<dbReference type="InterPro" id="IPR014222">
    <property type="entry name" value="Cyt_c_oxidase_su2"/>
</dbReference>
<dbReference type="InterPro" id="IPR011759">
    <property type="entry name" value="Cyt_c_oxidase_su2_TM_dom"/>
</dbReference>
<dbReference type="InterPro" id="IPR036257">
    <property type="entry name" value="Cyt_c_oxidase_su2_TM_sf"/>
</dbReference>
<dbReference type="NCBIfam" id="TIGR02866">
    <property type="entry name" value="CoxB"/>
    <property type="match status" value="1"/>
</dbReference>
<dbReference type="PANTHER" id="PTHR22888:SF9">
    <property type="entry name" value="CYTOCHROME C OXIDASE SUBUNIT 2"/>
    <property type="match status" value="1"/>
</dbReference>
<dbReference type="PANTHER" id="PTHR22888">
    <property type="entry name" value="CYTOCHROME C OXIDASE, SUBUNIT II"/>
    <property type="match status" value="1"/>
</dbReference>
<dbReference type="Pfam" id="PF00116">
    <property type="entry name" value="COX2"/>
    <property type="match status" value="1"/>
</dbReference>
<dbReference type="Pfam" id="PF02790">
    <property type="entry name" value="COX2_TM"/>
    <property type="match status" value="1"/>
</dbReference>
<dbReference type="PRINTS" id="PR01166">
    <property type="entry name" value="CYCOXIDASEII"/>
</dbReference>
<dbReference type="SUPFAM" id="SSF49503">
    <property type="entry name" value="Cupredoxins"/>
    <property type="match status" value="1"/>
</dbReference>
<dbReference type="SUPFAM" id="SSF81464">
    <property type="entry name" value="Cytochrome c oxidase subunit II-like, transmembrane region"/>
    <property type="match status" value="1"/>
</dbReference>
<dbReference type="PROSITE" id="PS00078">
    <property type="entry name" value="COX2"/>
    <property type="match status" value="1"/>
</dbReference>
<dbReference type="PROSITE" id="PS50857">
    <property type="entry name" value="COX2_CUA"/>
    <property type="match status" value="1"/>
</dbReference>
<dbReference type="PROSITE" id="PS50999">
    <property type="entry name" value="COX2_TM"/>
    <property type="match status" value="1"/>
</dbReference>
<geneLocation type="mitochondrion"/>
<proteinExistence type="inferred from homology"/>